<reference key="1">
    <citation type="journal article" date="2008" name="FEMS Yeast Res.">
        <title>Comparative genome analysis of a Saccharomyces cerevisiae wine strain.</title>
        <authorList>
            <person name="Borneman A.R."/>
            <person name="Forgan A.H."/>
            <person name="Pretorius I.S."/>
            <person name="Chambers P.J."/>
        </authorList>
    </citation>
    <scope>NUCLEOTIDE SEQUENCE [LARGE SCALE GENOMIC DNA]</scope>
    <source>
        <strain>AWRI1631</strain>
    </source>
</reference>
<dbReference type="EMBL" id="ABSV01000423">
    <property type="protein sequence ID" value="EDZ73179.1"/>
    <property type="molecule type" value="Genomic_DNA"/>
</dbReference>
<dbReference type="SMR" id="B5VFW2"/>
<dbReference type="Proteomes" id="UP000008988">
    <property type="component" value="Unassembled WGS sequence"/>
</dbReference>
<dbReference type="GO" id="GO:0005739">
    <property type="term" value="C:mitochondrion"/>
    <property type="evidence" value="ECO:0007669"/>
    <property type="project" value="UniProtKB-SubCell"/>
</dbReference>
<name>RRG1_YEAS6</name>
<comment type="function">
    <text evidence="1">Essential for respiratory growth and required for mitochondrial protein synthesis. Required for vacuolar acidification (By similarity).</text>
</comment>
<comment type="subcellular location">
    <subcellularLocation>
        <location evidence="1">Mitochondrion</location>
    </subcellularLocation>
</comment>
<comment type="PTM">
    <text evidence="1">N-glycosylated. Glycosylation is important for correct localization of the protein (By similarity).</text>
</comment>
<comment type="similarity">
    <text evidence="2">Belongs to the RRG1 family.</text>
</comment>
<evidence type="ECO:0000250" key="1"/>
<evidence type="ECO:0000305" key="2"/>
<keyword id="KW-0325">Glycoprotein</keyword>
<keyword id="KW-0496">Mitochondrion</keyword>
<sequence>MAQNFGKIPSHKSYVLSLYRTVLRNIPKCCHSYAFQYEIKKTLSKQLFKHKHDKSSWSVYTLLNEFSLLNNCLLEGKLQEIKNLMKPLKKMKKQLETTKILNSLTSLGDVKTNDPEEVRRFHVLSAYIKRKQDLGLLPAYIPKTYQHKLLLPLALNEHACLKLFHIQQKLKNGPPSAGLSYTKEGRNQIWFVRSPINKGRQQSKKLGILIRKERKDSQKNIDNLNFCEINAAWALHEAIWEEYLESKKIIKVNLPKYLEYAANIPKSTKCNPSSQYQKIKEWVDPVREIMFELHSKSFQRVEYFNKYKEKLLKNGGQLAYFDKKSKEMYAKRLTLFRKMSKETLPYVTLFIEGRDLPSVLAKYGF</sequence>
<accession>B5VFW2</accession>
<feature type="chain" id="PRO_0000402248" description="Required for respiratory growth protein 1, mitochondrial">
    <location>
        <begin position="1"/>
        <end position="365"/>
    </location>
</feature>
<protein>
    <recommendedName>
        <fullName>Required for respiratory growth protein 1, mitochondrial</fullName>
    </recommendedName>
</protein>
<gene>
    <name type="primary">RRG1</name>
    <name type="ORF">AWRI1631_42850</name>
</gene>
<organism>
    <name type="scientific">Saccharomyces cerevisiae (strain AWRI1631)</name>
    <name type="common">Baker's yeast</name>
    <dbReference type="NCBI Taxonomy" id="545124"/>
    <lineage>
        <taxon>Eukaryota</taxon>
        <taxon>Fungi</taxon>
        <taxon>Dikarya</taxon>
        <taxon>Ascomycota</taxon>
        <taxon>Saccharomycotina</taxon>
        <taxon>Saccharomycetes</taxon>
        <taxon>Saccharomycetales</taxon>
        <taxon>Saccharomycetaceae</taxon>
        <taxon>Saccharomyces</taxon>
    </lineage>
</organism>
<proteinExistence type="inferred from homology"/>